<dbReference type="EC" id="3.5.5.1"/>
<dbReference type="EMBL" id="CP000075">
    <property type="protein sequence ID" value="AAY35081.1"/>
    <property type="molecule type" value="Genomic_DNA"/>
</dbReference>
<dbReference type="RefSeq" id="WP_011266126.1">
    <property type="nucleotide sequence ID" value="NC_007005.1"/>
</dbReference>
<dbReference type="RefSeq" id="YP_233119.1">
    <property type="nucleotide sequence ID" value="NC_007005.1"/>
</dbReference>
<dbReference type="SMR" id="Q500U1"/>
<dbReference type="STRING" id="205918.Psyr_0007"/>
<dbReference type="KEGG" id="psb:Psyr_0007"/>
<dbReference type="PATRIC" id="fig|205918.7.peg.7"/>
<dbReference type="eggNOG" id="COG0388">
    <property type="taxonomic scope" value="Bacteria"/>
</dbReference>
<dbReference type="HOGENOM" id="CLU_030130_6_0_6"/>
<dbReference type="OrthoDB" id="9803803at2"/>
<dbReference type="BRENDA" id="3.5.5.7">
    <property type="organism ID" value="12469"/>
</dbReference>
<dbReference type="Proteomes" id="UP000000426">
    <property type="component" value="Chromosome"/>
</dbReference>
<dbReference type="GO" id="GO:0080061">
    <property type="term" value="F:indole-3-acetonitrile nitrilase activity"/>
    <property type="evidence" value="ECO:0007669"/>
    <property type="project" value="RHEA"/>
</dbReference>
<dbReference type="GO" id="GO:0018822">
    <property type="term" value="F:nitrile hydratase activity"/>
    <property type="evidence" value="ECO:0007669"/>
    <property type="project" value="TreeGrafter"/>
</dbReference>
<dbReference type="GO" id="GO:0051410">
    <property type="term" value="P:detoxification of nitrogen compound"/>
    <property type="evidence" value="ECO:0007669"/>
    <property type="project" value="TreeGrafter"/>
</dbReference>
<dbReference type="CDD" id="cd07564">
    <property type="entry name" value="nitrilases_CHs"/>
    <property type="match status" value="1"/>
</dbReference>
<dbReference type="Gene3D" id="3.60.110.10">
    <property type="entry name" value="Carbon-nitrogen hydrolase"/>
    <property type="match status" value="1"/>
</dbReference>
<dbReference type="InterPro" id="IPR003010">
    <property type="entry name" value="C-N_Hydrolase"/>
</dbReference>
<dbReference type="InterPro" id="IPR036526">
    <property type="entry name" value="C-N_Hydrolase_sf"/>
</dbReference>
<dbReference type="InterPro" id="IPR000132">
    <property type="entry name" value="Nitrilase/CN_hydratase_CS"/>
</dbReference>
<dbReference type="InterPro" id="IPR044149">
    <property type="entry name" value="Nitrilases_CHs"/>
</dbReference>
<dbReference type="PANTHER" id="PTHR46044:SF1">
    <property type="entry name" value="CN HYDROLASE DOMAIN-CONTAINING PROTEIN"/>
    <property type="match status" value="1"/>
</dbReference>
<dbReference type="PANTHER" id="PTHR46044">
    <property type="entry name" value="NITRILASE"/>
    <property type="match status" value="1"/>
</dbReference>
<dbReference type="Pfam" id="PF00795">
    <property type="entry name" value="CN_hydrolase"/>
    <property type="match status" value="1"/>
</dbReference>
<dbReference type="SUPFAM" id="SSF56317">
    <property type="entry name" value="Carbon-nitrogen hydrolase"/>
    <property type="match status" value="1"/>
</dbReference>
<dbReference type="PROSITE" id="PS50263">
    <property type="entry name" value="CN_HYDROLASE"/>
    <property type="match status" value="1"/>
</dbReference>
<dbReference type="PROSITE" id="PS00920">
    <property type="entry name" value="NITRIL_CHT_1"/>
    <property type="match status" value="1"/>
</dbReference>
<dbReference type="PROSITE" id="PS00921">
    <property type="entry name" value="NITRIL_CHT_2"/>
    <property type="match status" value="1"/>
</dbReference>
<reference key="1">
    <citation type="journal article" date="2005" name="Proc. Natl. Acad. Sci. U.S.A.">
        <title>Comparison of the complete genome sequences of Pseudomonas syringae pv. syringae B728a and pv. tomato DC3000.</title>
        <authorList>
            <person name="Feil H."/>
            <person name="Feil W.S."/>
            <person name="Chain P."/>
            <person name="Larimer F."/>
            <person name="Dibartolo G."/>
            <person name="Copeland A."/>
            <person name="Lykidis A."/>
            <person name="Trong S."/>
            <person name="Nolan M."/>
            <person name="Goltsman E."/>
            <person name="Thiel J."/>
            <person name="Malfatti S."/>
            <person name="Loper J.E."/>
            <person name="Lapidus A."/>
            <person name="Detter J.C."/>
            <person name="Land M."/>
            <person name="Richardson P.M."/>
            <person name="Kyrpides N.C."/>
            <person name="Ivanova N."/>
            <person name="Lindow S.E."/>
        </authorList>
    </citation>
    <scope>NUCLEOTIDE SEQUENCE [LARGE SCALE GENOMIC DNA]</scope>
    <source>
        <strain>B728a</strain>
    </source>
</reference>
<reference key="2">
    <citation type="journal article" date="2009" name="Mol. Plant Pathol.">
        <title>Pseudomonas syringae pv. syringae B728a hydrolyses indole-3-acetonitrile to the plant hormone indole-3-acetic acid.</title>
        <authorList>
            <person name="Howden A.J."/>
            <person name="Rico A."/>
            <person name="Mentlak T."/>
            <person name="Miguet L."/>
            <person name="Preston G.M."/>
        </authorList>
    </citation>
    <scope>FUNCTION</scope>
    <scope>CATALYTIC ACTIVITY</scope>
    <scope>DISRUPTION PHENOTYPE</scope>
    <source>
        <strain>B728a</strain>
    </source>
</reference>
<organism>
    <name type="scientific">Pseudomonas syringae pv. syringae (strain B728a)</name>
    <dbReference type="NCBI Taxonomy" id="205918"/>
    <lineage>
        <taxon>Bacteria</taxon>
        <taxon>Pseudomonadati</taxon>
        <taxon>Pseudomonadota</taxon>
        <taxon>Gammaproteobacteria</taxon>
        <taxon>Pseudomonadales</taxon>
        <taxon>Pseudomonadaceae</taxon>
        <taxon>Pseudomonas</taxon>
        <taxon>Pseudomonas syringae</taxon>
    </lineage>
</organism>
<name>NITR_PSEU2</name>
<feature type="chain" id="PRO_0000425712" description="Nitrilase">
    <location>
        <begin position="1"/>
        <end position="336"/>
    </location>
</feature>
<feature type="domain" description="CN hydrolase" evidence="1">
    <location>
        <begin position="5"/>
        <end position="278"/>
    </location>
</feature>
<feature type="active site" description="Proton acceptor" evidence="1">
    <location>
        <position position="45"/>
    </location>
</feature>
<feature type="active site" description="Proton donor" evidence="1">
    <location>
        <position position="127"/>
    </location>
</feature>
<feature type="active site" description="Nucleophile" evidence="1 2">
    <location>
        <position position="161"/>
    </location>
</feature>
<proteinExistence type="evidence at protein level"/>
<keyword id="KW-0378">Hydrolase</keyword>
<gene>
    <name type="ordered locus">Psyr_0007</name>
</gene>
<sequence>MKEPLKVACVQAAPVFLDLDATVDKTITLMEQAAAAGAGLIAFPETWIPGYPWFLWLDAPAWNMPLVQRYHQQSLVLDSVQARRISDAARHLGLYVVLGYSERNKASLYIGQWIIDDHGETVGVRRKLKATHVERTMFGEGDGASLRTFETPVGVLGALCCWEHLQPLSKYAMYAQNEQIHVAAWPSFSLYRNATSALGPEVNTAASRVYAAEGQCFVLAPCAIVSPEMIEMLCDSDAKRSLLQAGGGHARIFGPDGSDLATPLGEHEEGLLYATLDPAALTLAKVAADPAGHYSRPDVTRLMFNPNPTPCVVDLPDLPISSESIELLRPDIALEV</sequence>
<accession>Q500U1</accession>
<evidence type="ECO:0000255" key="1">
    <source>
        <dbReference type="PROSITE-ProRule" id="PRU00054"/>
    </source>
</evidence>
<evidence type="ECO:0000255" key="2">
    <source>
        <dbReference type="PROSITE-ProRule" id="PRU10105"/>
    </source>
</evidence>
<evidence type="ECO:0000269" key="3">
    <source>
    </source>
</evidence>
<evidence type="ECO:0000305" key="4"/>
<protein>
    <recommendedName>
        <fullName>Nitrilase</fullName>
        <ecNumber>3.5.5.1</ecNumber>
    </recommendedName>
    <alternativeName>
        <fullName>Arylacetonitrilase</fullName>
    </alternativeName>
    <alternativeName>
        <fullName>Indole-3-acetonitrile hydrolase</fullName>
        <shortName>IAN hydrolase</shortName>
        <shortName>Indole-3-acetonitrilase</shortName>
    </alternativeName>
</protein>
<comment type="function">
    <text evidence="3">Arylacetonitrilase which is capable of hydrolyzing indole-3-acetonitrile (IAN) to the plant hormone indole-3-acetate (IAA), and allows the plant pathogenic bacterium to use IAN as a sole nitrogen source. Is also able to hydrolyze phenylpropionitrile (PPN), allowing the use of this compound as a sole nitrogen source. This enzyme may represent an additional mechanism for IAA biosynthesis or may be used to degrade and assimilate aldoximes and nitriles produced during host plant secondary metabolism.</text>
</comment>
<comment type="catalytic activity">
    <reaction evidence="2 3">
        <text>a nitrile + 2 H2O = a carboxylate + NH4(+)</text>
        <dbReference type="Rhea" id="RHEA:21724"/>
        <dbReference type="ChEBI" id="CHEBI:15377"/>
        <dbReference type="ChEBI" id="CHEBI:18379"/>
        <dbReference type="ChEBI" id="CHEBI:28938"/>
        <dbReference type="ChEBI" id="CHEBI:29067"/>
        <dbReference type="EC" id="3.5.5.1"/>
    </reaction>
</comment>
<comment type="catalytic activity">
    <reaction evidence="3">
        <text>(indol-3-yl)acetonitrile + 2 H2O = (indol-3-yl)acetate + NH4(+)</text>
        <dbReference type="Rhea" id="RHEA:45776"/>
        <dbReference type="ChEBI" id="CHEBI:15377"/>
        <dbReference type="ChEBI" id="CHEBI:17566"/>
        <dbReference type="ChEBI" id="CHEBI:28938"/>
        <dbReference type="ChEBI" id="CHEBI:30854"/>
        <dbReference type="EC" id="3.5.5.1"/>
    </reaction>
</comment>
<comment type="catalytic activity">
    <reaction evidence="3">
        <text>phenylpropanonitrile + 2 H2O = 3-phenylpropanoate + NH4(+)</text>
        <dbReference type="Rhea" id="RHEA:45784"/>
        <dbReference type="ChEBI" id="CHEBI:15377"/>
        <dbReference type="ChEBI" id="CHEBI:28938"/>
        <dbReference type="ChEBI" id="CHEBI:51057"/>
        <dbReference type="ChEBI" id="CHEBI:85426"/>
        <dbReference type="EC" id="3.5.5.1"/>
    </reaction>
</comment>
<comment type="disruption phenotype">
    <text evidence="3">Cells lacking this gene are unable to grow in medium in which the sole nitrogen source is either indole-3-acetonitrile (IAN) or phenylpropionitrile (PPN). Their growth is also moderately reduced in medium with ammonia as the nitrogen source; one possible explanation for this phenotype is that the disruption of Psyr_0007 results in the accumulation of endogenous nitriles that can no longer be degraded and which inhibit bacterial growth.</text>
</comment>
<comment type="similarity">
    <text evidence="4">Belongs to the carbon-nitrogen hydrolase superfamily. Nitrilase family.</text>
</comment>